<name>RS7_SHEPW</name>
<sequence>MPRRRVVGQRKILPDPKFNSELLAKFINVIMQDGKKSTAEKIIYKALDTASEKKGEDHLVILEAALDNVRPSVEVKSRRVGGSTYQVPCEVRPVRRNALAMRWLVEAARKRGEKSMALRLAGEMLDASENKGTAVKKREDVHRMAEANKAFAHYRW</sequence>
<organism>
    <name type="scientific">Shewanella piezotolerans (strain WP3 / JCM 13877)</name>
    <dbReference type="NCBI Taxonomy" id="225849"/>
    <lineage>
        <taxon>Bacteria</taxon>
        <taxon>Pseudomonadati</taxon>
        <taxon>Pseudomonadota</taxon>
        <taxon>Gammaproteobacteria</taxon>
        <taxon>Alteromonadales</taxon>
        <taxon>Shewanellaceae</taxon>
        <taxon>Shewanella</taxon>
    </lineage>
</organism>
<dbReference type="EMBL" id="CP000472">
    <property type="protein sequence ID" value="ACJ28762.1"/>
    <property type="molecule type" value="Genomic_DNA"/>
</dbReference>
<dbReference type="RefSeq" id="WP_020912134.1">
    <property type="nucleotide sequence ID" value="NC_011566.1"/>
</dbReference>
<dbReference type="SMR" id="B8CNC8"/>
<dbReference type="STRING" id="225849.swp_2006"/>
<dbReference type="KEGG" id="swp:swp_2006"/>
<dbReference type="eggNOG" id="COG0049">
    <property type="taxonomic scope" value="Bacteria"/>
</dbReference>
<dbReference type="HOGENOM" id="CLU_072226_1_1_6"/>
<dbReference type="OrthoDB" id="9807653at2"/>
<dbReference type="Proteomes" id="UP000000753">
    <property type="component" value="Chromosome"/>
</dbReference>
<dbReference type="GO" id="GO:0015935">
    <property type="term" value="C:small ribosomal subunit"/>
    <property type="evidence" value="ECO:0007669"/>
    <property type="project" value="InterPro"/>
</dbReference>
<dbReference type="GO" id="GO:0019843">
    <property type="term" value="F:rRNA binding"/>
    <property type="evidence" value="ECO:0007669"/>
    <property type="project" value="UniProtKB-UniRule"/>
</dbReference>
<dbReference type="GO" id="GO:0003735">
    <property type="term" value="F:structural constituent of ribosome"/>
    <property type="evidence" value="ECO:0007669"/>
    <property type="project" value="InterPro"/>
</dbReference>
<dbReference type="GO" id="GO:0000049">
    <property type="term" value="F:tRNA binding"/>
    <property type="evidence" value="ECO:0007669"/>
    <property type="project" value="UniProtKB-UniRule"/>
</dbReference>
<dbReference type="GO" id="GO:0006412">
    <property type="term" value="P:translation"/>
    <property type="evidence" value="ECO:0007669"/>
    <property type="project" value="UniProtKB-UniRule"/>
</dbReference>
<dbReference type="CDD" id="cd14869">
    <property type="entry name" value="uS7_Bacteria"/>
    <property type="match status" value="1"/>
</dbReference>
<dbReference type="FunFam" id="1.10.455.10:FF:000001">
    <property type="entry name" value="30S ribosomal protein S7"/>
    <property type="match status" value="1"/>
</dbReference>
<dbReference type="Gene3D" id="1.10.455.10">
    <property type="entry name" value="Ribosomal protein S7 domain"/>
    <property type="match status" value="1"/>
</dbReference>
<dbReference type="HAMAP" id="MF_00480_B">
    <property type="entry name" value="Ribosomal_uS7_B"/>
    <property type="match status" value="1"/>
</dbReference>
<dbReference type="InterPro" id="IPR000235">
    <property type="entry name" value="Ribosomal_uS7"/>
</dbReference>
<dbReference type="InterPro" id="IPR005717">
    <property type="entry name" value="Ribosomal_uS7_bac/org-type"/>
</dbReference>
<dbReference type="InterPro" id="IPR020606">
    <property type="entry name" value="Ribosomal_uS7_CS"/>
</dbReference>
<dbReference type="InterPro" id="IPR023798">
    <property type="entry name" value="Ribosomal_uS7_dom"/>
</dbReference>
<dbReference type="InterPro" id="IPR036823">
    <property type="entry name" value="Ribosomal_uS7_dom_sf"/>
</dbReference>
<dbReference type="NCBIfam" id="TIGR01029">
    <property type="entry name" value="rpsG_bact"/>
    <property type="match status" value="1"/>
</dbReference>
<dbReference type="PANTHER" id="PTHR11205">
    <property type="entry name" value="RIBOSOMAL PROTEIN S7"/>
    <property type="match status" value="1"/>
</dbReference>
<dbReference type="Pfam" id="PF00177">
    <property type="entry name" value="Ribosomal_S7"/>
    <property type="match status" value="1"/>
</dbReference>
<dbReference type="PIRSF" id="PIRSF002122">
    <property type="entry name" value="RPS7p_RPS7a_RPS5e_RPS7o"/>
    <property type="match status" value="1"/>
</dbReference>
<dbReference type="SUPFAM" id="SSF47973">
    <property type="entry name" value="Ribosomal protein S7"/>
    <property type="match status" value="1"/>
</dbReference>
<dbReference type="PROSITE" id="PS00052">
    <property type="entry name" value="RIBOSOMAL_S7"/>
    <property type="match status" value="1"/>
</dbReference>
<gene>
    <name evidence="1" type="primary">rpsG</name>
    <name type="ordered locus">swp_2006</name>
</gene>
<keyword id="KW-0687">Ribonucleoprotein</keyword>
<keyword id="KW-0689">Ribosomal protein</keyword>
<keyword id="KW-0694">RNA-binding</keyword>
<keyword id="KW-0699">rRNA-binding</keyword>
<keyword id="KW-0820">tRNA-binding</keyword>
<protein>
    <recommendedName>
        <fullName evidence="1">Small ribosomal subunit protein uS7</fullName>
    </recommendedName>
    <alternativeName>
        <fullName evidence="2">30S ribosomal protein S7</fullName>
    </alternativeName>
</protein>
<accession>B8CNC8</accession>
<proteinExistence type="inferred from homology"/>
<reference key="1">
    <citation type="journal article" date="2008" name="PLoS ONE">
        <title>Environmental adaptation: genomic analysis of the piezotolerant and psychrotolerant deep-sea iron reducing bacterium Shewanella piezotolerans WP3.</title>
        <authorList>
            <person name="Wang F."/>
            <person name="Wang J."/>
            <person name="Jian H."/>
            <person name="Zhang B."/>
            <person name="Li S."/>
            <person name="Wang F."/>
            <person name="Zeng X."/>
            <person name="Gao L."/>
            <person name="Bartlett D.H."/>
            <person name="Yu J."/>
            <person name="Hu S."/>
            <person name="Xiao X."/>
        </authorList>
    </citation>
    <scope>NUCLEOTIDE SEQUENCE [LARGE SCALE GENOMIC DNA]</scope>
    <source>
        <strain>WP3 / JCM 13877</strain>
    </source>
</reference>
<feature type="chain" id="PRO_1000126001" description="Small ribosomal subunit protein uS7">
    <location>
        <begin position="1"/>
        <end position="156"/>
    </location>
</feature>
<evidence type="ECO:0000255" key="1">
    <source>
        <dbReference type="HAMAP-Rule" id="MF_00480"/>
    </source>
</evidence>
<evidence type="ECO:0000305" key="2"/>
<comment type="function">
    <text evidence="1">One of the primary rRNA binding proteins, it binds directly to 16S rRNA where it nucleates assembly of the head domain of the 30S subunit. Is located at the subunit interface close to the decoding center, probably blocks exit of the E-site tRNA.</text>
</comment>
<comment type="subunit">
    <text evidence="1">Part of the 30S ribosomal subunit. Contacts proteins S9 and S11.</text>
</comment>
<comment type="similarity">
    <text evidence="1">Belongs to the universal ribosomal protein uS7 family.</text>
</comment>